<keyword id="KW-1003">Cell membrane</keyword>
<keyword id="KW-0133">Cell shape</keyword>
<keyword id="KW-0961">Cell wall biogenesis/degradation</keyword>
<keyword id="KW-0328">Glycosyltransferase</keyword>
<keyword id="KW-0472">Membrane</keyword>
<keyword id="KW-0573">Peptidoglycan synthesis</keyword>
<keyword id="KW-1185">Reference proteome</keyword>
<keyword id="KW-0808">Transferase</keyword>
<keyword id="KW-0812">Transmembrane</keyword>
<keyword id="KW-1133">Transmembrane helix</keyword>
<sequence length="270" mass="31057">MKRSDRYKTYNKPNDSNDSNQLHHNTYFKPVNKPQKKKKGKGIILKLLIPILIIIGIIIGVMYALSLRADTDELKNITEKESFVYASDMRDYTKGAFIAMEDERFYKHHGFDVKGTSRALFSTLSDKSVQGGSTITQQVVKNYYYDNEQSITRKIKELFVAHRVEKEYDKNEILSFYMNNIYYGSDQYTIESAANHYFGVTTDKNNPNLPQISVLQSAILASKINAPSVYNINDMSDNFTNRVKTDLEKMKQQGYISNSQYENAIQELGV</sequence>
<reference key="1">
    <citation type="journal article" date="2005" name="Proc. Natl. Acad. Sci. U.S.A.">
        <title>Whole genome sequence of Staphylococcus saprophyticus reveals the pathogenesis of uncomplicated urinary tract infection.</title>
        <authorList>
            <person name="Kuroda M."/>
            <person name="Yamashita A."/>
            <person name="Hirakawa H."/>
            <person name="Kumano M."/>
            <person name="Morikawa K."/>
            <person name="Higashide M."/>
            <person name="Maruyama A."/>
            <person name="Inose Y."/>
            <person name="Matoba K."/>
            <person name="Toh H."/>
            <person name="Kuhara S."/>
            <person name="Hattori M."/>
            <person name="Ohta T."/>
        </authorList>
    </citation>
    <scope>NUCLEOTIDE SEQUENCE [LARGE SCALE GENOMIC DNA]</scope>
    <source>
        <strain>ATCC 15305 / DSM 20229 / NCIMB 8711 / NCTC 7292 / S-41</strain>
    </source>
</reference>
<feature type="chain" id="PRO_0000083162" description="Monofunctional glycosyltransferase">
    <location>
        <begin position="1"/>
        <end position="270"/>
    </location>
</feature>
<feature type="transmembrane region" description="Helical" evidence="1">
    <location>
        <begin position="47"/>
        <end position="67"/>
    </location>
</feature>
<feature type="region of interest" description="Disordered" evidence="2">
    <location>
        <begin position="1"/>
        <end position="35"/>
    </location>
</feature>
<feature type="compositionally biased region" description="Polar residues" evidence="2">
    <location>
        <begin position="11"/>
        <end position="24"/>
    </location>
</feature>
<protein>
    <recommendedName>
        <fullName evidence="1">Monofunctional glycosyltransferase</fullName>
        <shortName evidence="1">MGT</shortName>
        <ecNumber evidence="1">2.4.99.28</ecNumber>
    </recommendedName>
    <alternativeName>
        <fullName evidence="1">Peptidoglycan TGase</fullName>
    </alternativeName>
</protein>
<comment type="function">
    <text evidence="1">Peptidoglycan polymerase that catalyzes glycan chain elongation using lipid-linked disaccharide-pentapeptide as the substrate.</text>
</comment>
<comment type="catalytic activity">
    <reaction evidence="1">
        <text>[GlcNAc-(1-&gt;4)-Mur2Ac(oyl-L-Ala-gamma-D-Glu-L-Lys-D-Ala-D-Ala)](n)-di-trans,octa-cis-undecaprenyl diphosphate + beta-D-GlcNAc-(1-&gt;4)-Mur2Ac(oyl-L-Ala-gamma-D-Glu-L-Lys-D-Ala-D-Ala)-di-trans,octa-cis-undecaprenyl diphosphate = [GlcNAc-(1-&gt;4)-Mur2Ac(oyl-L-Ala-gamma-D-Glu-L-Lys-D-Ala-D-Ala)](n+1)-di-trans,octa-cis-undecaprenyl diphosphate + di-trans,octa-cis-undecaprenyl diphosphate + H(+)</text>
        <dbReference type="Rhea" id="RHEA:23708"/>
        <dbReference type="Rhea" id="RHEA-COMP:9602"/>
        <dbReference type="Rhea" id="RHEA-COMP:9603"/>
        <dbReference type="ChEBI" id="CHEBI:15378"/>
        <dbReference type="ChEBI" id="CHEBI:58405"/>
        <dbReference type="ChEBI" id="CHEBI:60033"/>
        <dbReference type="ChEBI" id="CHEBI:78435"/>
        <dbReference type="EC" id="2.4.99.28"/>
    </reaction>
</comment>
<comment type="pathway">
    <text evidence="1">Cell wall biogenesis; peptidoglycan biosynthesis.</text>
</comment>
<comment type="subcellular location">
    <subcellularLocation>
        <location evidence="1">Cell membrane</location>
        <topology evidence="1">Single-pass membrane protein</topology>
    </subcellularLocation>
</comment>
<comment type="similarity">
    <text evidence="1">Belongs to the glycosyltransferase 51 family.</text>
</comment>
<gene>
    <name evidence="1" type="primary">mgt</name>
    <name type="ordered locus">SSP0919</name>
</gene>
<proteinExistence type="inferred from homology"/>
<organism>
    <name type="scientific">Staphylococcus saprophyticus subsp. saprophyticus (strain ATCC 15305 / DSM 20229 / NCIMB 8711 / NCTC 7292 / S-41)</name>
    <dbReference type="NCBI Taxonomy" id="342451"/>
    <lineage>
        <taxon>Bacteria</taxon>
        <taxon>Bacillati</taxon>
        <taxon>Bacillota</taxon>
        <taxon>Bacilli</taxon>
        <taxon>Bacillales</taxon>
        <taxon>Staphylococcaceae</taxon>
        <taxon>Staphylococcus</taxon>
    </lineage>
</organism>
<accession>Q49YR9</accession>
<dbReference type="EC" id="2.4.99.28" evidence="1"/>
<dbReference type="EMBL" id="AP008934">
    <property type="protein sequence ID" value="BAE18064.1"/>
    <property type="molecule type" value="Genomic_DNA"/>
</dbReference>
<dbReference type="SMR" id="Q49YR9"/>
<dbReference type="CAZy" id="GT51">
    <property type="family name" value="Glycosyltransferase Family 51"/>
</dbReference>
<dbReference type="GeneID" id="3616822"/>
<dbReference type="KEGG" id="ssp:SSP0919"/>
<dbReference type="PATRIC" id="fig|342451.11.peg.918"/>
<dbReference type="eggNOG" id="COG0744">
    <property type="taxonomic scope" value="Bacteria"/>
</dbReference>
<dbReference type="HOGENOM" id="CLU_006354_1_2_9"/>
<dbReference type="OrthoDB" id="9766909at2"/>
<dbReference type="UniPathway" id="UPA00219"/>
<dbReference type="Proteomes" id="UP000006371">
    <property type="component" value="Chromosome"/>
</dbReference>
<dbReference type="GO" id="GO:0030288">
    <property type="term" value="C:outer membrane-bounded periplasmic space"/>
    <property type="evidence" value="ECO:0007669"/>
    <property type="project" value="TreeGrafter"/>
</dbReference>
<dbReference type="GO" id="GO:0005886">
    <property type="term" value="C:plasma membrane"/>
    <property type="evidence" value="ECO:0007669"/>
    <property type="project" value="UniProtKB-SubCell"/>
</dbReference>
<dbReference type="GO" id="GO:0008955">
    <property type="term" value="F:peptidoglycan glycosyltransferase activity"/>
    <property type="evidence" value="ECO:0007669"/>
    <property type="project" value="UniProtKB-UniRule"/>
</dbReference>
<dbReference type="GO" id="GO:0071555">
    <property type="term" value="P:cell wall organization"/>
    <property type="evidence" value="ECO:0007669"/>
    <property type="project" value="UniProtKB-KW"/>
</dbReference>
<dbReference type="GO" id="GO:0009252">
    <property type="term" value="P:peptidoglycan biosynthetic process"/>
    <property type="evidence" value="ECO:0007669"/>
    <property type="project" value="UniProtKB-UniRule"/>
</dbReference>
<dbReference type="GO" id="GO:0008360">
    <property type="term" value="P:regulation of cell shape"/>
    <property type="evidence" value="ECO:0007669"/>
    <property type="project" value="UniProtKB-KW"/>
</dbReference>
<dbReference type="Gene3D" id="1.10.3810.10">
    <property type="entry name" value="Biosynthetic peptidoglycan transglycosylase-like"/>
    <property type="match status" value="1"/>
</dbReference>
<dbReference type="HAMAP" id="MF_01434">
    <property type="entry name" value="MGT"/>
    <property type="match status" value="1"/>
</dbReference>
<dbReference type="InterPro" id="IPR001264">
    <property type="entry name" value="Glyco_trans_51"/>
</dbReference>
<dbReference type="InterPro" id="IPR050396">
    <property type="entry name" value="Glycosyltr_51/Transpeptidase"/>
</dbReference>
<dbReference type="InterPro" id="IPR023346">
    <property type="entry name" value="Lysozyme-like_dom_sf"/>
</dbReference>
<dbReference type="InterPro" id="IPR022978">
    <property type="entry name" value="Monofunct_glyco_trans"/>
</dbReference>
<dbReference type="InterPro" id="IPR036950">
    <property type="entry name" value="PBP_transglycosylase"/>
</dbReference>
<dbReference type="NCBIfam" id="NF010008">
    <property type="entry name" value="PRK13481.1"/>
    <property type="match status" value="1"/>
</dbReference>
<dbReference type="PANTHER" id="PTHR32282">
    <property type="entry name" value="BINDING PROTEIN TRANSPEPTIDASE, PUTATIVE-RELATED"/>
    <property type="match status" value="1"/>
</dbReference>
<dbReference type="PANTHER" id="PTHR32282:SF11">
    <property type="entry name" value="PENICILLIN-BINDING PROTEIN 1B"/>
    <property type="match status" value="1"/>
</dbReference>
<dbReference type="Pfam" id="PF00912">
    <property type="entry name" value="Transgly"/>
    <property type="match status" value="1"/>
</dbReference>
<dbReference type="SUPFAM" id="SSF53955">
    <property type="entry name" value="Lysozyme-like"/>
    <property type="match status" value="1"/>
</dbReference>
<evidence type="ECO:0000255" key="1">
    <source>
        <dbReference type="HAMAP-Rule" id="MF_01434"/>
    </source>
</evidence>
<evidence type="ECO:0000256" key="2">
    <source>
        <dbReference type="SAM" id="MobiDB-lite"/>
    </source>
</evidence>
<name>MGT_STAS1</name>